<evidence type="ECO:0000255" key="1">
    <source>
        <dbReference type="HAMAP-Rule" id="MF_00588"/>
    </source>
</evidence>
<keyword id="KW-0067">ATP-binding</keyword>
<keyword id="KW-0436">Ligase</keyword>
<keyword id="KW-0547">Nucleotide-binding</keyword>
<keyword id="KW-0648">Protein biosynthesis</keyword>
<keyword id="KW-1185">Reference proteome</keyword>
<dbReference type="EC" id="6.3.5.-" evidence="1"/>
<dbReference type="EMBL" id="BA000002">
    <property type="protein sequence ID" value="BAA81214.1"/>
    <property type="molecule type" value="Genomic_DNA"/>
</dbReference>
<dbReference type="PIR" id="F72528">
    <property type="entry name" value="F72528"/>
</dbReference>
<dbReference type="RefSeq" id="WP_010866862.1">
    <property type="nucleotide sequence ID" value="NC_000854.2"/>
</dbReference>
<dbReference type="SMR" id="Q9Y9T6"/>
<dbReference type="STRING" id="272557.APE_2202"/>
<dbReference type="EnsemblBacteria" id="BAA81214">
    <property type="protein sequence ID" value="BAA81214"/>
    <property type="gene ID" value="APE_2202"/>
</dbReference>
<dbReference type="GeneID" id="1445262"/>
<dbReference type="KEGG" id="ape:APE_2202"/>
<dbReference type="PATRIC" id="fig|272557.25.peg.1471"/>
<dbReference type="eggNOG" id="arCOG01719">
    <property type="taxonomic scope" value="Archaea"/>
</dbReference>
<dbReference type="Proteomes" id="UP000002518">
    <property type="component" value="Chromosome"/>
</dbReference>
<dbReference type="GO" id="GO:0005737">
    <property type="term" value="C:cytoplasm"/>
    <property type="evidence" value="ECO:0007669"/>
    <property type="project" value="InterPro"/>
</dbReference>
<dbReference type="GO" id="GO:0004812">
    <property type="term" value="F:aminoacyl-tRNA ligase activity"/>
    <property type="evidence" value="ECO:0007669"/>
    <property type="project" value="InterPro"/>
</dbReference>
<dbReference type="GO" id="GO:0005524">
    <property type="term" value="F:ATP binding"/>
    <property type="evidence" value="ECO:0007669"/>
    <property type="project" value="UniProtKB-KW"/>
</dbReference>
<dbReference type="GO" id="GO:0050567">
    <property type="term" value="F:glutaminyl-tRNA synthase (glutamine-hydrolyzing) activity"/>
    <property type="evidence" value="ECO:0007669"/>
    <property type="project" value="UniProtKB-UniRule"/>
</dbReference>
<dbReference type="GO" id="GO:0070681">
    <property type="term" value="P:glutaminyl-tRNAGln biosynthesis via transamidation"/>
    <property type="evidence" value="ECO:0007669"/>
    <property type="project" value="TreeGrafter"/>
</dbReference>
<dbReference type="GO" id="GO:0006412">
    <property type="term" value="P:translation"/>
    <property type="evidence" value="ECO:0007669"/>
    <property type="project" value="UniProtKB-UniRule"/>
</dbReference>
<dbReference type="Gene3D" id="1.10.10.410">
    <property type="match status" value="1"/>
</dbReference>
<dbReference type="Gene3D" id="3.30.1360.30">
    <property type="entry name" value="GAD-like domain"/>
    <property type="match status" value="1"/>
</dbReference>
<dbReference type="Gene3D" id="1.10.150.380">
    <property type="entry name" value="GatB domain, N-terminal subdomain"/>
    <property type="match status" value="1"/>
</dbReference>
<dbReference type="HAMAP" id="MF_00588">
    <property type="entry name" value="GatE"/>
    <property type="match status" value="1"/>
</dbReference>
<dbReference type="InterPro" id="IPR017959">
    <property type="entry name" value="Asn/Gln-tRNA_amidoTrfase_suB/E"/>
</dbReference>
<dbReference type="InterPro" id="IPR006075">
    <property type="entry name" value="Asn/Gln-tRNA_Trfase_suB/E_cat"/>
</dbReference>
<dbReference type="InterPro" id="IPR018027">
    <property type="entry name" value="Asn/Gln_amidotransferase"/>
</dbReference>
<dbReference type="InterPro" id="IPR003789">
    <property type="entry name" value="Asn/Gln_tRNA_amidoTrase-B-like"/>
</dbReference>
<dbReference type="InterPro" id="IPR004115">
    <property type="entry name" value="GAD-like_sf"/>
</dbReference>
<dbReference type="InterPro" id="IPR029351">
    <property type="entry name" value="GAD_dom"/>
</dbReference>
<dbReference type="InterPro" id="IPR042114">
    <property type="entry name" value="GatB_C_1"/>
</dbReference>
<dbReference type="InterPro" id="IPR023168">
    <property type="entry name" value="GatB_Yqey_C_2"/>
</dbReference>
<dbReference type="InterPro" id="IPR004414">
    <property type="entry name" value="GatE"/>
</dbReference>
<dbReference type="InterPro" id="IPR017958">
    <property type="entry name" value="Gln-tRNA_amidoTrfase_suB_CS"/>
</dbReference>
<dbReference type="InterPro" id="IPR014746">
    <property type="entry name" value="Gln_synth/guanido_kin_cat_dom"/>
</dbReference>
<dbReference type="NCBIfam" id="TIGR00134">
    <property type="entry name" value="gatE_arch"/>
    <property type="match status" value="1"/>
</dbReference>
<dbReference type="NCBIfam" id="NF003107">
    <property type="entry name" value="PRK04028.1"/>
    <property type="match status" value="1"/>
</dbReference>
<dbReference type="PANTHER" id="PTHR11659">
    <property type="entry name" value="GLUTAMYL-TRNA GLN AMIDOTRANSFERASE SUBUNIT B MITOCHONDRIAL AND PROKARYOTIC PET112-RELATED"/>
    <property type="match status" value="1"/>
</dbReference>
<dbReference type="PANTHER" id="PTHR11659:SF2">
    <property type="entry name" value="GLUTAMYL-TRNA(GLN) AMIDOTRANSFERASE SUBUNIT E"/>
    <property type="match status" value="1"/>
</dbReference>
<dbReference type="Pfam" id="PF02938">
    <property type="entry name" value="GAD"/>
    <property type="match status" value="1"/>
</dbReference>
<dbReference type="Pfam" id="PF02934">
    <property type="entry name" value="GatB_N"/>
    <property type="match status" value="1"/>
</dbReference>
<dbReference type="Pfam" id="PF02637">
    <property type="entry name" value="GatB_Yqey"/>
    <property type="match status" value="1"/>
</dbReference>
<dbReference type="SMART" id="SM00845">
    <property type="entry name" value="GatB_Yqey"/>
    <property type="match status" value="1"/>
</dbReference>
<dbReference type="SUPFAM" id="SSF55261">
    <property type="entry name" value="GAD domain-like"/>
    <property type="match status" value="1"/>
</dbReference>
<dbReference type="SUPFAM" id="SSF89095">
    <property type="entry name" value="GatB/YqeY motif"/>
    <property type="match status" value="1"/>
</dbReference>
<dbReference type="SUPFAM" id="SSF55931">
    <property type="entry name" value="Glutamine synthetase/guanido kinase"/>
    <property type="match status" value="1"/>
</dbReference>
<dbReference type="PROSITE" id="PS01234">
    <property type="entry name" value="GATB"/>
    <property type="match status" value="1"/>
</dbReference>
<gene>
    <name evidence="1" type="primary">gatE</name>
    <name type="ordered locus">APE_2202</name>
</gene>
<protein>
    <recommendedName>
        <fullName evidence="1">Glutamyl-tRNA(Gln) amidotransferase subunit E</fullName>
        <shortName evidence="1">Glu-ADT subunit E</shortName>
        <ecNumber evidence="1">6.3.5.-</ecNumber>
    </recommendedName>
</protein>
<reference key="1">
    <citation type="journal article" date="1999" name="DNA Res.">
        <title>Complete genome sequence of an aerobic hyper-thermophilic crenarchaeon, Aeropyrum pernix K1.</title>
        <authorList>
            <person name="Kawarabayasi Y."/>
            <person name="Hino Y."/>
            <person name="Horikawa H."/>
            <person name="Yamazaki S."/>
            <person name="Haikawa Y."/>
            <person name="Jin-no K."/>
            <person name="Takahashi M."/>
            <person name="Sekine M."/>
            <person name="Baba S."/>
            <person name="Ankai A."/>
            <person name="Kosugi H."/>
            <person name="Hosoyama A."/>
            <person name="Fukui S."/>
            <person name="Nagai Y."/>
            <person name="Nishijima K."/>
            <person name="Nakazawa H."/>
            <person name="Takamiya M."/>
            <person name="Masuda S."/>
            <person name="Funahashi T."/>
            <person name="Tanaka T."/>
            <person name="Kudoh Y."/>
            <person name="Yamazaki J."/>
            <person name="Kushida N."/>
            <person name="Oguchi A."/>
            <person name="Aoki K."/>
            <person name="Kubota K."/>
            <person name="Nakamura Y."/>
            <person name="Nomura N."/>
            <person name="Sako Y."/>
            <person name="Kikuchi H."/>
        </authorList>
    </citation>
    <scope>NUCLEOTIDE SEQUENCE [LARGE SCALE GENOMIC DNA]</scope>
    <source>
        <strain>ATCC 700893 / DSM 11879 / JCM 9820 / NBRC 100138 / K1</strain>
    </source>
</reference>
<proteinExistence type="inferred from homology"/>
<organism>
    <name type="scientific">Aeropyrum pernix (strain ATCC 700893 / DSM 11879 / JCM 9820 / NBRC 100138 / K1)</name>
    <dbReference type="NCBI Taxonomy" id="272557"/>
    <lineage>
        <taxon>Archaea</taxon>
        <taxon>Thermoproteota</taxon>
        <taxon>Thermoprotei</taxon>
        <taxon>Desulfurococcales</taxon>
        <taxon>Desulfurococcaceae</taxon>
        <taxon>Aeropyrum</taxon>
    </lineage>
</organism>
<comment type="function">
    <text evidence="1">Allows the formation of correctly charged Gln-tRNA(Gln) through the transamidation of misacylated Glu-tRNA(Gln) in organisms which lack glutaminyl-tRNA synthetase. The reaction takes place in the presence of glutamine and ATP through an activated gamma-phospho-Glu-tRNA(Gln). The GatDE system is specific for glutamate and does not act on aspartate.</text>
</comment>
<comment type="catalytic activity">
    <reaction evidence="1">
        <text>L-glutamyl-tRNA(Gln) + L-glutamine + ATP + H2O = L-glutaminyl-tRNA(Gln) + L-glutamate + ADP + phosphate + H(+)</text>
        <dbReference type="Rhea" id="RHEA:17521"/>
        <dbReference type="Rhea" id="RHEA-COMP:9681"/>
        <dbReference type="Rhea" id="RHEA-COMP:9684"/>
        <dbReference type="ChEBI" id="CHEBI:15377"/>
        <dbReference type="ChEBI" id="CHEBI:15378"/>
        <dbReference type="ChEBI" id="CHEBI:29985"/>
        <dbReference type="ChEBI" id="CHEBI:30616"/>
        <dbReference type="ChEBI" id="CHEBI:43474"/>
        <dbReference type="ChEBI" id="CHEBI:58359"/>
        <dbReference type="ChEBI" id="CHEBI:78520"/>
        <dbReference type="ChEBI" id="CHEBI:78521"/>
        <dbReference type="ChEBI" id="CHEBI:456216"/>
    </reaction>
</comment>
<comment type="subunit">
    <text evidence="1">Heterodimer of GatD and GatE.</text>
</comment>
<comment type="similarity">
    <text evidence="1">Belongs to the GatB/GatE family. GatE subfamily.</text>
</comment>
<accession>Q9Y9T6</accession>
<name>GATE_AERPE</name>
<sequence length="642" mass="70693">MSRIDYRSIGLKVGLEIHQQLDTREKLFCSCPAELGEEEHDEFVRQLRPTRSELGDVDPAALFEWRKGRLYIYQAPLNHSCLVEADEEPPHPINREAVAVAVAVAKALGSAIVDEVHVMRKTVIDGSNTSGFQRTAIVALGGSIRVGSKEVPIETIVIEEDAARKVGEKGRYVVYRLDRLGIPLIEIATAPVIESPGEAREVALAIGTMLRLTGKVKRGLGTIRQDLNVSIRGGAKTEIKGVQRLELIPRVIEYEVLRQLSLLRIRDMLRERGVSREELENVEPVDVSSLLAGSKSRVIKKVLSSGGKVIAVKLPRMKGIIGMEIMPGRRFGTELADYARFWGGVGGIIHSDELPGYGITGDEVEKIYEAVGGDPGVDAFALVADKPSNALRAARAVLERVAAALEGVPEETRAALEDGTTRYLRPRPGSARMYPETDIPPLRIDENILSMAEPLVPEPPEVVAMRLKKEYGLSDQLAWEVIRDERYRLIVSLLEKYRGTLEPSYVAGFFVVVLRGLEGEGVEVWKVDDAILEKILDMVAQGEIAREAAAELVKYLANNPGSTVEEAVEKLGLRRLSREEVERIVDEIVGGLREEILKRGEKAVGLVMGRAMAKLRGRADGRLVSEIVSRKIREILDSDGKG</sequence>
<feature type="chain" id="PRO_0000140068" description="Glutamyl-tRNA(Gln) amidotransferase subunit E">
    <location>
        <begin position="1"/>
        <end position="642"/>
    </location>
</feature>